<reference key="1">
    <citation type="submission" date="2001-09" db="EMBL/GenBank/DDBJ databases">
        <title>EST mining and functional expression assays identify extracellular elicitor proteins from Phytophthora.</title>
        <authorList>
            <person name="Torto T.A."/>
            <person name="Styer A."/>
            <person name="Kamoun S."/>
        </authorList>
    </citation>
    <scope>NUCLEOTIDE SEQUENCE [MRNA]</scope>
</reference>
<keyword id="KW-0072">Autophagy</keyword>
<keyword id="KW-0968">Cytoplasmic vesicle</keyword>
<keyword id="KW-0449">Lipoprotein</keyword>
<keyword id="KW-0472">Membrane</keyword>
<keyword id="KW-0653">Protein transport</keyword>
<keyword id="KW-0813">Transport</keyword>
<keyword id="KW-0833">Ubl conjugation pathway</keyword>
<keyword id="KW-0926">Vacuole</keyword>
<dbReference type="EMBL" id="AF424655">
    <property type="protein sequence ID" value="AAN31480.1"/>
    <property type="molecule type" value="mRNA"/>
</dbReference>
<dbReference type="SMR" id="Q8H715"/>
<dbReference type="VEuPathDB" id="FungiDB:PITG_03393"/>
<dbReference type="OMA" id="KNQIRAK"/>
<dbReference type="GO" id="GO:0000421">
    <property type="term" value="C:autophagosome membrane"/>
    <property type="evidence" value="ECO:0007669"/>
    <property type="project" value="UniProtKB-SubCell"/>
</dbReference>
<dbReference type="GO" id="GO:0031410">
    <property type="term" value="C:cytoplasmic vesicle"/>
    <property type="evidence" value="ECO:0007669"/>
    <property type="project" value="UniProtKB-KW"/>
</dbReference>
<dbReference type="GO" id="GO:0006914">
    <property type="term" value="P:autophagy"/>
    <property type="evidence" value="ECO:0007669"/>
    <property type="project" value="UniProtKB-KW"/>
</dbReference>
<dbReference type="GO" id="GO:0015031">
    <property type="term" value="P:protein transport"/>
    <property type="evidence" value="ECO:0007669"/>
    <property type="project" value="UniProtKB-KW"/>
</dbReference>
<dbReference type="CDD" id="cd16128">
    <property type="entry name" value="Ubl_ATG8"/>
    <property type="match status" value="1"/>
</dbReference>
<dbReference type="FunFam" id="3.10.20.90:FF:000010">
    <property type="entry name" value="Autophagy-related protein"/>
    <property type="match status" value="1"/>
</dbReference>
<dbReference type="Gene3D" id="3.10.20.90">
    <property type="entry name" value="Phosphatidylinositol 3-kinase Catalytic Subunit, Chain A, domain 1"/>
    <property type="match status" value="1"/>
</dbReference>
<dbReference type="InterPro" id="IPR004241">
    <property type="entry name" value="Atg8-like"/>
</dbReference>
<dbReference type="InterPro" id="IPR029071">
    <property type="entry name" value="Ubiquitin-like_domsf"/>
</dbReference>
<dbReference type="PANTHER" id="PTHR10969">
    <property type="entry name" value="MICROTUBULE-ASSOCIATED PROTEINS 1A/1B LIGHT CHAIN 3-RELATED"/>
    <property type="match status" value="1"/>
</dbReference>
<dbReference type="Pfam" id="PF02991">
    <property type="entry name" value="ATG8"/>
    <property type="match status" value="1"/>
</dbReference>
<dbReference type="SUPFAM" id="SSF54236">
    <property type="entry name" value="Ubiquitin-like"/>
    <property type="match status" value="1"/>
</dbReference>
<accession>Q8H715</accession>
<organism>
    <name type="scientific">Phytophthora infestans</name>
    <name type="common">Potato late blight agent</name>
    <name type="synonym">Botrytis infestans</name>
    <dbReference type="NCBI Taxonomy" id="4787"/>
    <lineage>
        <taxon>Eukaryota</taxon>
        <taxon>Sar</taxon>
        <taxon>Stramenopiles</taxon>
        <taxon>Oomycota</taxon>
        <taxon>Peronosporales</taxon>
        <taxon>Peronosporaceae</taxon>
        <taxon>Phytophthora</taxon>
    </lineage>
</organism>
<sequence>MSSFKKEHPFEKRQAEAQRIRSKYPDRIPVICEKADRSDIPDIDKKKYLVPADLTVGQFVYVIRKRIKLSPEKAIFIFINNVLPPTAALMSNIYEEQKDVDGFLYITYSGENTFGQ</sequence>
<proteinExistence type="inferred from homology"/>
<feature type="chain" id="PRO_0000017228" description="Autophagy-related protein 8">
    <location>
        <begin position="1"/>
        <end position="115"/>
    </location>
</feature>
<feature type="propeptide" id="PRO_0000017229" description="Removed in mature form" evidence="1">
    <location>
        <position position="116"/>
    </location>
</feature>
<feature type="site" description="Cleavage; by ATG4" evidence="1">
    <location>
        <begin position="115"/>
        <end position="116"/>
    </location>
</feature>
<feature type="lipid moiety-binding region" description="Phosphatidylethanolamine amidated glycine" evidence="1">
    <location>
        <position position="115"/>
    </location>
</feature>
<comment type="function">
    <text evidence="1">Ubiquitin-like modifier involved in autophagosome formation. With ATG4, mediates the delivery of the autophagosomes to the vacuole via the microtubule cytoskeleton. Required for selective autophagic degradation of the nucleus (nucleophagy) as well as for mitophagy which contributes to regulate mitochondrial quantity and quality by eliminating the mitochondria to a basal level to fulfill cellular energy requirements and preventing excess ROS production. Participates also in membrane fusion events that take place in the early secretory pathway. Also involved in endoplasmic reticulum-specific autophagic process and is essential for the survival of cells subjected to severe ER stress. The ATG8-PE conjugate mediates tethering between adjacent membranes and stimulates membrane hemifusion, leading to expansion of the autophagosomal membrane during autophagy.</text>
</comment>
<comment type="subcellular location">
    <subcellularLocation>
        <location evidence="1">Cytoplasmic vesicle</location>
        <location evidence="1">Autophagosome membrane</location>
        <topology evidence="1">Lipid-anchor</topology>
    </subcellularLocation>
    <subcellularLocation>
        <location evidence="1">Vacuole membrane</location>
        <topology evidence="1">Lipid-anchor</topology>
    </subcellularLocation>
</comment>
<comment type="PTM">
    <text evidence="1">The C-terminal Gln residue is removed to expose Gly-115 at the C-terminus. The C-terminal Gly is then amidated with phosphatidylethanolamine by an activating system similar to that for ubiquitin.</text>
</comment>
<comment type="similarity">
    <text evidence="2">Belongs to the ATG8 family.</text>
</comment>
<evidence type="ECO:0000250" key="1">
    <source>
        <dbReference type="UniProtKB" id="P38182"/>
    </source>
</evidence>
<evidence type="ECO:0000305" key="2"/>
<gene>
    <name type="primary">ATG8</name>
</gene>
<name>ATG8_PHYIN</name>
<protein>
    <recommendedName>
        <fullName>Autophagy-related protein 8</fullName>
    </recommendedName>
    <alternativeName>
        <fullName>Autophagy-related ubiquitin-like modifier ATG8</fullName>
    </alternativeName>
</protein>